<reference key="1">
    <citation type="journal article" date="2009" name="PLoS Genet.">
        <title>Organised genome dynamics in the Escherichia coli species results in highly diverse adaptive paths.</title>
        <authorList>
            <person name="Touchon M."/>
            <person name="Hoede C."/>
            <person name="Tenaillon O."/>
            <person name="Barbe V."/>
            <person name="Baeriswyl S."/>
            <person name="Bidet P."/>
            <person name="Bingen E."/>
            <person name="Bonacorsi S."/>
            <person name="Bouchier C."/>
            <person name="Bouvet O."/>
            <person name="Calteau A."/>
            <person name="Chiapello H."/>
            <person name="Clermont O."/>
            <person name="Cruveiller S."/>
            <person name="Danchin A."/>
            <person name="Diard M."/>
            <person name="Dossat C."/>
            <person name="Karoui M.E."/>
            <person name="Frapy E."/>
            <person name="Garry L."/>
            <person name="Ghigo J.M."/>
            <person name="Gilles A.M."/>
            <person name="Johnson J."/>
            <person name="Le Bouguenec C."/>
            <person name="Lescat M."/>
            <person name="Mangenot S."/>
            <person name="Martinez-Jehanne V."/>
            <person name="Matic I."/>
            <person name="Nassif X."/>
            <person name="Oztas S."/>
            <person name="Petit M.A."/>
            <person name="Pichon C."/>
            <person name="Rouy Z."/>
            <person name="Ruf C.S."/>
            <person name="Schneider D."/>
            <person name="Tourret J."/>
            <person name="Vacherie B."/>
            <person name="Vallenet D."/>
            <person name="Medigue C."/>
            <person name="Rocha E.P.C."/>
            <person name="Denamur E."/>
        </authorList>
    </citation>
    <scope>NUCLEOTIDE SEQUENCE [LARGE SCALE GENOMIC DNA]</scope>
    <source>
        <strain>IAI1</strain>
    </source>
</reference>
<gene>
    <name evidence="1" type="primary">iscS</name>
    <name type="ordered locus">ECIAI1_2582</name>
</gene>
<sequence length="404" mass="45090">MKLPIYLDYSATTPVDPRVAEKMMQFMTMDGTFGNPASRSHRFGWQAEEAVDIARNQIADLVGADPREIVFTSGATESDNLAIKGAANFYQKKGKHIITSKTEHKAVLDTCRQLEREGFEVTYLAPQRNGIIDLKELEAAMRDDTILVSIMHVNNEIGVVQDIAAIGEMCRARGIIYHVDATQSVGKLPIDLSQLKVDLMSFSGHKIYGPKGIGALYVRRKPRVRIEAQMHGGGHERGMRSGTLPVHQIVGMGEAYRIAKEEMATEMERLRGLRNRLWNGIKDIEEVYLNGDLEHGAPNILNVSFNYVEGESLIMALKDLAVSSGSACTSASLEPSYVLRALGLNDELAHSSIRFSLGRFTTEEEIDYTIELVRKSIGRLRDLSPLWEMYKQGVDLNSIEWAHH</sequence>
<name>ISCS_ECO8A</name>
<keyword id="KW-0001">2Fe-2S</keyword>
<keyword id="KW-0963">Cytoplasm</keyword>
<keyword id="KW-0408">Iron</keyword>
<keyword id="KW-0411">Iron-sulfur</keyword>
<keyword id="KW-0479">Metal-binding</keyword>
<keyword id="KW-0663">Pyridoxal phosphate</keyword>
<keyword id="KW-0808">Transferase</keyword>
<proteinExistence type="inferred from homology"/>
<dbReference type="EC" id="2.8.1.7" evidence="1"/>
<dbReference type="EMBL" id="CU928160">
    <property type="protein sequence ID" value="CAQ99421.1"/>
    <property type="molecule type" value="Genomic_DNA"/>
</dbReference>
<dbReference type="RefSeq" id="WP_001295373.1">
    <property type="nucleotide sequence ID" value="NC_011741.1"/>
</dbReference>
<dbReference type="SMR" id="B7M7N3"/>
<dbReference type="GeneID" id="93774606"/>
<dbReference type="KEGG" id="ecr:ECIAI1_2582"/>
<dbReference type="HOGENOM" id="CLU_003433_0_2_6"/>
<dbReference type="UniPathway" id="UPA00266"/>
<dbReference type="GO" id="GO:1990221">
    <property type="term" value="C:L-cysteine desulfurase complex"/>
    <property type="evidence" value="ECO:0007669"/>
    <property type="project" value="UniProtKB-ARBA"/>
</dbReference>
<dbReference type="GO" id="GO:0051537">
    <property type="term" value="F:2 iron, 2 sulfur cluster binding"/>
    <property type="evidence" value="ECO:0007669"/>
    <property type="project" value="UniProtKB-UniRule"/>
</dbReference>
<dbReference type="GO" id="GO:0031071">
    <property type="term" value="F:cysteine desulfurase activity"/>
    <property type="evidence" value="ECO:0007669"/>
    <property type="project" value="UniProtKB-UniRule"/>
</dbReference>
<dbReference type="GO" id="GO:0046872">
    <property type="term" value="F:metal ion binding"/>
    <property type="evidence" value="ECO:0007669"/>
    <property type="project" value="UniProtKB-KW"/>
</dbReference>
<dbReference type="GO" id="GO:0030170">
    <property type="term" value="F:pyridoxal phosphate binding"/>
    <property type="evidence" value="ECO:0007669"/>
    <property type="project" value="UniProtKB-UniRule"/>
</dbReference>
<dbReference type="GO" id="GO:0044571">
    <property type="term" value="P:[2Fe-2S] cluster assembly"/>
    <property type="evidence" value="ECO:0007669"/>
    <property type="project" value="UniProtKB-UniRule"/>
</dbReference>
<dbReference type="FunFam" id="3.40.640.10:FF:000003">
    <property type="entry name" value="Cysteine desulfurase IscS"/>
    <property type="match status" value="1"/>
</dbReference>
<dbReference type="FunFam" id="3.90.1150.10:FF:000002">
    <property type="entry name" value="Cysteine desulfurase IscS"/>
    <property type="match status" value="1"/>
</dbReference>
<dbReference type="Gene3D" id="3.90.1150.10">
    <property type="entry name" value="Aspartate Aminotransferase, domain 1"/>
    <property type="match status" value="1"/>
</dbReference>
<dbReference type="Gene3D" id="3.40.640.10">
    <property type="entry name" value="Type I PLP-dependent aspartate aminotransferase-like (Major domain)"/>
    <property type="match status" value="1"/>
</dbReference>
<dbReference type="HAMAP" id="MF_00331">
    <property type="entry name" value="Cys_desulf_IscS"/>
    <property type="match status" value="1"/>
</dbReference>
<dbReference type="InterPro" id="IPR000192">
    <property type="entry name" value="Aminotrans_V_dom"/>
</dbReference>
<dbReference type="InterPro" id="IPR020578">
    <property type="entry name" value="Aminotrans_V_PyrdxlP_BS"/>
</dbReference>
<dbReference type="InterPro" id="IPR010240">
    <property type="entry name" value="Cys_deSase_IscS"/>
</dbReference>
<dbReference type="InterPro" id="IPR016454">
    <property type="entry name" value="Cysteine_dSase"/>
</dbReference>
<dbReference type="InterPro" id="IPR015424">
    <property type="entry name" value="PyrdxlP-dep_Trfase"/>
</dbReference>
<dbReference type="InterPro" id="IPR015421">
    <property type="entry name" value="PyrdxlP-dep_Trfase_major"/>
</dbReference>
<dbReference type="InterPro" id="IPR015422">
    <property type="entry name" value="PyrdxlP-dep_Trfase_small"/>
</dbReference>
<dbReference type="NCBIfam" id="TIGR02006">
    <property type="entry name" value="IscS"/>
    <property type="match status" value="1"/>
</dbReference>
<dbReference type="NCBIfam" id="NF002806">
    <property type="entry name" value="PRK02948.1"/>
    <property type="match status" value="1"/>
</dbReference>
<dbReference type="NCBIfam" id="NF010611">
    <property type="entry name" value="PRK14012.1"/>
    <property type="match status" value="1"/>
</dbReference>
<dbReference type="PANTHER" id="PTHR11601:SF34">
    <property type="entry name" value="CYSTEINE DESULFURASE"/>
    <property type="match status" value="1"/>
</dbReference>
<dbReference type="PANTHER" id="PTHR11601">
    <property type="entry name" value="CYSTEINE DESULFURYLASE FAMILY MEMBER"/>
    <property type="match status" value="1"/>
</dbReference>
<dbReference type="Pfam" id="PF00266">
    <property type="entry name" value="Aminotran_5"/>
    <property type="match status" value="1"/>
</dbReference>
<dbReference type="PIRSF" id="PIRSF005572">
    <property type="entry name" value="NifS"/>
    <property type="match status" value="1"/>
</dbReference>
<dbReference type="SUPFAM" id="SSF53383">
    <property type="entry name" value="PLP-dependent transferases"/>
    <property type="match status" value="1"/>
</dbReference>
<dbReference type="PROSITE" id="PS00595">
    <property type="entry name" value="AA_TRANSFER_CLASS_5"/>
    <property type="match status" value="1"/>
</dbReference>
<protein>
    <recommendedName>
        <fullName evidence="1">Cysteine desulfurase IscS</fullName>
        <ecNumber evidence="1">2.8.1.7</ecNumber>
    </recommendedName>
</protein>
<feature type="chain" id="PRO_1000119624" description="Cysteine desulfurase IscS">
    <location>
        <begin position="1"/>
        <end position="404"/>
    </location>
</feature>
<feature type="active site" description="Cysteine persulfide intermediate" evidence="1">
    <location>
        <position position="328"/>
    </location>
</feature>
<feature type="binding site" evidence="1">
    <location>
        <begin position="75"/>
        <end position="76"/>
    </location>
    <ligand>
        <name>pyridoxal 5'-phosphate</name>
        <dbReference type="ChEBI" id="CHEBI:597326"/>
    </ligand>
</feature>
<feature type="binding site" evidence="1">
    <location>
        <position position="155"/>
    </location>
    <ligand>
        <name>pyridoxal 5'-phosphate</name>
        <dbReference type="ChEBI" id="CHEBI:597326"/>
    </ligand>
</feature>
<feature type="binding site" evidence="1">
    <location>
        <position position="183"/>
    </location>
    <ligand>
        <name>pyridoxal 5'-phosphate</name>
        <dbReference type="ChEBI" id="CHEBI:597326"/>
    </ligand>
</feature>
<feature type="binding site" evidence="1">
    <location>
        <begin position="203"/>
        <end position="205"/>
    </location>
    <ligand>
        <name>pyridoxal 5'-phosphate</name>
        <dbReference type="ChEBI" id="CHEBI:597326"/>
    </ligand>
</feature>
<feature type="binding site" evidence="1">
    <location>
        <position position="243"/>
    </location>
    <ligand>
        <name>pyridoxal 5'-phosphate</name>
        <dbReference type="ChEBI" id="CHEBI:597326"/>
    </ligand>
</feature>
<feature type="binding site" description="via persulfide group" evidence="1">
    <location>
        <position position="328"/>
    </location>
    <ligand>
        <name>[2Fe-2S] cluster</name>
        <dbReference type="ChEBI" id="CHEBI:190135"/>
        <note>ligand shared with IscU</note>
    </ligand>
</feature>
<feature type="modified residue" description="N6-(pyridoxal phosphate)lysine" evidence="1">
    <location>
        <position position="206"/>
    </location>
</feature>
<evidence type="ECO:0000255" key="1">
    <source>
        <dbReference type="HAMAP-Rule" id="MF_00331"/>
    </source>
</evidence>
<comment type="function">
    <text evidence="1">Master enzyme that delivers sulfur to a number of partners involved in Fe-S cluster assembly, tRNA modification or cofactor biosynthesis. Catalyzes the removal of elemental sulfur and selenium atoms from cysteine and selenocysteine to produce alanine. Functions as a sulfur delivery protein for Fe-S cluster synthesis onto IscU, an Fe-S scaffold assembly protein, as well as other S acceptor proteins. Also functions as a selenium delivery protein in the pathway for the biosynthesis of selenophosphate.</text>
</comment>
<comment type="catalytic activity">
    <reaction evidence="1">
        <text>(sulfur carrier)-H + L-cysteine = (sulfur carrier)-SH + L-alanine</text>
        <dbReference type="Rhea" id="RHEA:43892"/>
        <dbReference type="Rhea" id="RHEA-COMP:14737"/>
        <dbReference type="Rhea" id="RHEA-COMP:14739"/>
        <dbReference type="ChEBI" id="CHEBI:29917"/>
        <dbReference type="ChEBI" id="CHEBI:35235"/>
        <dbReference type="ChEBI" id="CHEBI:57972"/>
        <dbReference type="ChEBI" id="CHEBI:64428"/>
        <dbReference type="EC" id="2.8.1.7"/>
    </reaction>
</comment>
<comment type="cofactor">
    <cofactor evidence="1">
        <name>pyridoxal 5'-phosphate</name>
        <dbReference type="ChEBI" id="CHEBI:597326"/>
    </cofactor>
</comment>
<comment type="pathway">
    <text evidence="1">Cofactor biosynthesis; iron-sulfur cluster biosynthesis.</text>
</comment>
<comment type="subunit">
    <text evidence="1">Homodimer. Forms a heterotetramer with IscU, interacts with other sulfur acceptors.</text>
</comment>
<comment type="subcellular location">
    <subcellularLocation>
        <location evidence="1">Cytoplasm</location>
    </subcellularLocation>
</comment>
<comment type="similarity">
    <text evidence="1">Belongs to the class-V pyridoxal-phosphate-dependent aminotransferase family. NifS/IscS subfamily.</text>
</comment>
<organism>
    <name type="scientific">Escherichia coli O8 (strain IAI1)</name>
    <dbReference type="NCBI Taxonomy" id="585034"/>
    <lineage>
        <taxon>Bacteria</taxon>
        <taxon>Pseudomonadati</taxon>
        <taxon>Pseudomonadota</taxon>
        <taxon>Gammaproteobacteria</taxon>
        <taxon>Enterobacterales</taxon>
        <taxon>Enterobacteriaceae</taxon>
        <taxon>Escherichia</taxon>
    </lineage>
</organism>
<accession>B7M7N3</accession>